<dbReference type="EMBL" id="U85945">
    <property type="protein sequence ID" value="AAB67062.1"/>
    <property type="molecule type" value="mRNA"/>
</dbReference>
<dbReference type="RefSeq" id="NP_776885.1">
    <property type="nucleotide sequence ID" value="NM_174460.2"/>
</dbReference>
<dbReference type="SMR" id="O19116"/>
<dbReference type="BioGRID" id="159350">
    <property type="interactions" value="2"/>
</dbReference>
<dbReference type="FunCoup" id="O19116">
    <property type="interactions" value="194"/>
</dbReference>
<dbReference type="STRING" id="9913.ENSBTAP00000039575"/>
<dbReference type="MEROPS" id="I93.002"/>
<dbReference type="GlyCosmos" id="O19116">
    <property type="glycosylation" value="1 site, No reported glycans"/>
</dbReference>
<dbReference type="GlyGen" id="O19116">
    <property type="glycosylation" value="1 site"/>
</dbReference>
<dbReference type="PaxDb" id="9913-ENSBTAP00000039575"/>
<dbReference type="GeneID" id="282068"/>
<dbReference type="KEGG" id="bta:282068"/>
<dbReference type="CTD" id="6422"/>
<dbReference type="VEuPathDB" id="HostDB:ENSBTAG00000027625"/>
<dbReference type="eggNOG" id="KOG3577">
    <property type="taxonomic scope" value="Eukaryota"/>
</dbReference>
<dbReference type="InParanoid" id="O19116"/>
<dbReference type="OMA" id="AMLEHMC"/>
<dbReference type="OrthoDB" id="5985572at2759"/>
<dbReference type="Proteomes" id="UP000009136">
    <property type="component" value="Chromosome 27"/>
</dbReference>
<dbReference type="Bgee" id="ENSBTAG00000027625">
    <property type="expression patterns" value="Expressed in uterine cervix and 98 other cell types or tissues"/>
</dbReference>
<dbReference type="GO" id="GO:0005615">
    <property type="term" value="C:extracellular space"/>
    <property type="evidence" value="ECO:0000314"/>
    <property type="project" value="BHF-UCL"/>
</dbReference>
<dbReference type="GO" id="GO:0005886">
    <property type="term" value="C:plasma membrane"/>
    <property type="evidence" value="ECO:0000314"/>
    <property type="project" value="MGI"/>
</dbReference>
<dbReference type="GO" id="GO:0005109">
    <property type="term" value="F:frizzled binding"/>
    <property type="evidence" value="ECO:0000353"/>
    <property type="project" value="BHF-UCL"/>
</dbReference>
<dbReference type="GO" id="GO:0017147">
    <property type="term" value="F:Wnt-protein binding"/>
    <property type="evidence" value="ECO:0000318"/>
    <property type="project" value="GO_Central"/>
</dbReference>
<dbReference type="GO" id="GO:0030036">
    <property type="term" value="P:actin cytoskeleton organization"/>
    <property type="evidence" value="ECO:0000314"/>
    <property type="project" value="MGI"/>
</dbReference>
<dbReference type="GO" id="GO:0060070">
    <property type="term" value="P:canonical Wnt signaling pathway"/>
    <property type="evidence" value="ECO:0000318"/>
    <property type="project" value="GO_Central"/>
</dbReference>
<dbReference type="GO" id="GO:0030154">
    <property type="term" value="P:cell differentiation"/>
    <property type="evidence" value="ECO:0007669"/>
    <property type="project" value="UniProtKB-KW"/>
</dbReference>
<dbReference type="GO" id="GO:0035567">
    <property type="term" value="P:non-canonical Wnt signaling pathway"/>
    <property type="evidence" value="ECO:0000318"/>
    <property type="project" value="GO_Central"/>
</dbReference>
<dbReference type="GO" id="GO:0001954">
    <property type="term" value="P:positive regulation of cell-matrix adhesion"/>
    <property type="evidence" value="ECO:0000314"/>
    <property type="project" value="BHF-UCL"/>
</dbReference>
<dbReference type="GO" id="GO:0051894">
    <property type="term" value="P:positive regulation of focal adhesion assembly"/>
    <property type="evidence" value="ECO:0000314"/>
    <property type="project" value="BHF-UCL"/>
</dbReference>
<dbReference type="GO" id="GO:0051496">
    <property type="term" value="P:positive regulation of stress fiber assembly"/>
    <property type="evidence" value="ECO:0000314"/>
    <property type="project" value="BHF-UCL"/>
</dbReference>
<dbReference type="GO" id="GO:0045765">
    <property type="term" value="P:regulation of angiogenesis"/>
    <property type="evidence" value="ECO:0000315"/>
    <property type="project" value="BHF-UCL"/>
</dbReference>
<dbReference type="GO" id="GO:0034446">
    <property type="term" value="P:substrate adhesion-dependent cell spreading"/>
    <property type="evidence" value="ECO:0000314"/>
    <property type="project" value="MGI"/>
</dbReference>
<dbReference type="GO" id="GO:0016055">
    <property type="term" value="P:Wnt signaling pathway"/>
    <property type="evidence" value="ECO:0000315"/>
    <property type="project" value="BHF-UCL"/>
</dbReference>
<dbReference type="CDD" id="cd07443">
    <property type="entry name" value="CRD_SFRP1"/>
    <property type="match status" value="1"/>
</dbReference>
<dbReference type="CDD" id="cd03580">
    <property type="entry name" value="NTR_Sfrp1_like"/>
    <property type="match status" value="1"/>
</dbReference>
<dbReference type="FunFam" id="2.40.50.120:FF:000003">
    <property type="entry name" value="Secreted frizzled-related protein 1"/>
    <property type="match status" value="1"/>
</dbReference>
<dbReference type="FunFam" id="1.10.2000.10:FF:000001">
    <property type="entry name" value="secreted frizzled-related protein 2"/>
    <property type="match status" value="1"/>
</dbReference>
<dbReference type="Gene3D" id="2.40.50.120">
    <property type="match status" value="1"/>
</dbReference>
<dbReference type="Gene3D" id="1.10.2000.10">
    <property type="entry name" value="Frizzled cysteine-rich domain"/>
    <property type="match status" value="1"/>
</dbReference>
<dbReference type="InterPro" id="IPR015526">
    <property type="entry name" value="Frizzled/SFRP"/>
</dbReference>
<dbReference type="InterPro" id="IPR020067">
    <property type="entry name" value="Frizzled_dom"/>
</dbReference>
<dbReference type="InterPro" id="IPR036790">
    <property type="entry name" value="Frizzled_dom_sf"/>
</dbReference>
<dbReference type="InterPro" id="IPR001134">
    <property type="entry name" value="Netrin_domain"/>
</dbReference>
<dbReference type="InterPro" id="IPR018933">
    <property type="entry name" value="Netrin_module_non-TIMP"/>
</dbReference>
<dbReference type="InterPro" id="IPR041760">
    <property type="entry name" value="SFRP1_CRD"/>
</dbReference>
<dbReference type="InterPro" id="IPR008993">
    <property type="entry name" value="TIMP-like_OB-fold"/>
</dbReference>
<dbReference type="PANTHER" id="PTHR11309">
    <property type="entry name" value="FRIZZLED"/>
    <property type="match status" value="1"/>
</dbReference>
<dbReference type="PANTHER" id="PTHR11309:SF87">
    <property type="entry name" value="SECRETED FRIZZLED-RELATED PROTEIN 1"/>
    <property type="match status" value="1"/>
</dbReference>
<dbReference type="Pfam" id="PF01392">
    <property type="entry name" value="Fz"/>
    <property type="match status" value="1"/>
</dbReference>
<dbReference type="Pfam" id="PF01759">
    <property type="entry name" value="NTR"/>
    <property type="match status" value="1"/>
</dbReference>
<dbReference type="SMART" id="SM00643">
    <property type="entry name" value="C345C"/>
    <property type="match status" value="1"/>
</dbReference>
<dbReference type="SMART" id="SM00063">
    <property type="entry name" value="FRI"/>
    <property type="match status" value="1"/>
</dbReference>
<dbReference type="SUPFAM" id="SSF63501">
    <property type="entry name" value="Frizzled cysteine-rich domain"/>
    <property type="match status" value="1"/>
</dbReference>
<dbReference type="SUPFAM" id="SSF50242">
    <property type="entry name" value="TIMP-like"/>
    <property type="match status" value="1"/>
</dbReference>
<dbReference type="PROSITE" id="PS50038">
    <property type="entry name" value="FZ"/>
    <property type="match status" value="1"/>
</dbReference>
<dbReference type="PROSITE" id="PS50189">
    <property type="entry name" value="NTR"/>
    <property type="match status" value="1"/>
</dbReference>
<gene>
    <name type="primary">SFRP1</name>
    <name type="synonym">FRZA</name>
</gene>
<comment type="function">
    <text evidence="1">Soluble frizzled-related proteins (sFRPS) function as modulators of Wnt signaling through direct interaction with Wnts. They have a role in regulating cell growth and differentiation in specific cell types. SFRP1 decreases intracellular beta-catenin levels (By similarity). Has antiproliferative effects on vascular cells, in vitro and in vivo, and can induce, in vivo, an angiogenic response. In vascular cell cycle, delays the G1 phase and entry into the S phase (By similarity). In kidney development, inhibits tubule formation and bud growth in metanephroi (By similarity). Inhibits WNT1/WNT4-mediated TCF-dependent transcription.</text>
</comment>
<comment type="subunit">
    <text evidence="1">Interacts with WNT1, WNT2, WNT4, WNT8, MYOC and FRZD6.</text>
</comment>
<comment type="subcellular location">
    <subcellularLocation>
        <location evidence="5">Secreted</location>
    </subcellularLocation>
    <text>Cell membrane or extracellular matrix-associated. Released by heparin-binding.</text>
</comment>
<comment type="tissue specificity">
    <text evidence="5">Highest levels in aortic endothelium, heart, spleen and eye. Lower levels in lung, brain and kidney. Weak expression in liver, skeletal muscle and the medial layer of the aorta. In the cortical brain, localized to neurons and small blood vessels. In the retina, localized to the inner and outer nuclear layers with high expression in the neuronal cell bodies. In the heart, restricted to myocytes. In lung, highest expression found in the epithelium of terminal bronchioles. In kidney, localized to the epithelium of collecting ducts of the medulla and, in spleen, expression restricted to the red pulp in cells associated with the sinuses.</text>
</comment>
<comment type="domain">
    <text evidence="1">The FZ domain is involved in binding with Wnt ligands.</text>
</comment>
<comment type="similarity">
    <text evidence="6">Belongs to the secreted frizzled-related protein (sFRP) family.</text>
</comment>
<name>SFRP1_BOVIN</name>
<protein>
    <recommendedName>
        <fullName>Secreted frizzled-related protein 1</fullName>
        <shortName>sFRP-1</shortName>
    </recommendedName>
    <alternativeName>
        <fullName>Frizzled in aorta protein</fullName>
        <shortName>FrzA protein</shortName>
    </alternativeName>
</protein>
<keyword id="KW-0217">Developmental protein</keyword>
<keyword id="KW-0221">Differentiation</keyword>
<keyword id="KW-1015">Disulfide bond</keyword>
<keyword id="KW-0325">Glycoprotein</keyword>
<keyword id="KW-1185">Reference proteome</keyword>
<keyword id="KW-0964">Secreted</keyword>
<keyword id="KW-0732">Signal</keyword>
<keyword id="KW-0879">Wnt signaling pathway</keyword>
<feature type="signal peptide" evidence="2">
    <location>
        <begin position="1"/>
        <end position="25"/>
    </location>
</feature>
<feature type="chain" id="PRO_0000032537" description="Secreted frizzled-related protein 1">
    <location>
        <begin position="26"/>
        <end position="308"/>
    </location>
</feature>
<feature type="domain" description="FZ" evidence="3">
    <location>
        <begin position="47"/>
        <end position="163"/>
    </location>
</feature>
<feature type="domain" description="NTR" evidence="4">
    <location>
        <begin position="180"/>
        <end position="300"/>
    </location>
</feature>
<feature type="glycosylation site" description="N-linked (GlcNAc...) asparagine" evidence="1">
    <location>
        <position position="167"/>
    </location>
</feature>
<feature type="disulfide bond" evidence="1">
    <location>
        <begin position="52"/>
        <end position="115"/>
    </location>
</feature>
<feature type="disulfide bond" evidence="1">
    <location>
        <begin position="62"/>
        <end position="108"/>
    </location>
</feature>
<feature type="disulfide bond" evidence="1">
    <location>
        <begin position="99"/>
        <end position="134"/>
    </location>
</feature>
<feature type="disulfide bond" evidence="1">
    <location>
        <begin position="123"/>
        <end position="160"/>
    </location>
</feature>
<feature type="disulfide bond" evidence="1">
    <location>
        <begin position="127"/>
        <end position="151"/>
    </location>
</feature>
<feature type="disulfide bond" evidence="1">
    <location>
        <begin position="180"/>
        <end position="250"/>
    </location>
</feature>
<feature type="disulfide bond" evidence="1">
    <location>
        <begin position="183"/>
        <end position="252"/>
    </location>
</feature>
<feature type="disulfide bond" evidence="1">
    <location>
        <begin position="197"/>
        <end position="300"/>
    </location>
</feature>
<evidence type="ECO:0000250" key="1"/>
<evidence type="ECO:0000255" key="2"/>
<evidence type="ECO:0000255" key="3">
    <source>
        <dbReference type="PROSITE-ProRule" id="PRU00090"/>
    </source>
</evidence>
<evidence type="ECO:0000255" key="4">
    <source>
        <dbReference type="PROSITE-ProRule" id="PRU00295"/>
    </source>
</evidence>
<evidence type="ECO:0000269" key="5">
    <source>
    </source>
</evidence>
<evidence type="ECO:0000305" key="6"/>
<accession>O19116</accession>
<proteinExistence type="evidence at transcript level"/>
<reference key="1">
    <citation type="journal article" date="1999" name="Circ. Res.">
        <title>Identification and cloning of a secreted protein related to the cysteine-rich domain of frizzled: evidence for a role in endothelial cell growth control.</title>
        <authorList>
            <person name="Duplaa C."/>
            <person name="Jaspard B."/>
            <person name="Moreau C."/>
            <person name="D'Amore P.A."/>
        </authorList>
    </citation>
    <scope>NUCLEOTIDE SEQUENCE [MRNA]</scope>
    <scope>SUBCELLULAR LOCATION</scope>
    <scope>TISSUE SPECIFICITY</scope>
    <source>
        <tissue>Aortic endothelium</tissue>
    </source>
</reference>
<sequence length="308" mass="34763">MGGGRWAAAGALLALAAGLLAAGSASEYDYVSFQSDIGAYQSGRFYTKPPQCVDIPADLRLCHNVGYKRMVLPNLLEHETMAEVKQQASSWVPLLNKNCHIGTQVFLCSLFAPVCLDRPIYPCRWLCEAVRDSCEPVMQFFGFYWPEMLKCDKFPEGDVCIAMTPPNATEASKPQGTTVCPPCDNELKSEAIIEHLCASEFALRMKIKEVKKENGDKKIVPKKKKPLKLGPIKKKELKKLVLYLKNGADCPCHQLDNLSHHFLIMGRKVKSQYLLTAIHKWDKKNKEFKTFMKKMKNHECPTFQSVFK</sequence>
<organism>
    <name type="scientific">Bos taurus</name>
    <name type="common">Bovine</name>
    <dbReference type="NCBI Taxonomy" id="9913"/>
    <lineage>
        <taxon>Eukaryota</taxon>
        <taxon>Metazoa</taxon>
        <taxon>Chordata</taxon>
        <taxon>Craniata</taxon>
        <taxon>Vertebrata</taxon>
        <taxon>Euteleostomi</taxon>
        <taxon>Mammalia</taxon>
        <taxon>Eutheria</taxon>
        <taxon>Laurasiatheria</taxon>
        <taxon>Artiodactyla</taxon>
        <taxon>Ruminantia</taxon>
        <taxon>Pecora</taxon>
        <taxon>Bovidae</taxon>
        <taxon>Bovinae</taxon>
        <taxon>Bos</taxon>
    </lineage>
</organism>